<gene>
    <name evidence="1" type="primary">metK</name>
    <name type="ordered locus">BPEN_259</name>
</gene>
<protein>
    <recommendedName>
        <fullName evidence="1">S-adenosylmethionine synthase</fullName>
        <shortName evidence="1">AdoMet synthase</shortName>
        <ecNumber evidence="1">2.5.1.6</ecNumber>
    </recommendedName>
    <alternativeName>
        <fullName evidence="1">MAT</fullName>
    </alternativeName>
    <alternativeName>
        <fullName evidence="1">Methionine adenosyltransferase</fullName>
    </alternativeName>
</protein>
<keyword id="KW-0067">ATP-binding</keyword>
<keyword id="KW-0963">Cytoplasm</keyword>
<keyword id="KW-0460">Magnesium</keyword>
<keyword id="KW-0479">Metal-binding</keyword>
<keyword id="KW-0547">Nucleotide-binding</keyword>
<keyword id="KW-0554">One-carbon metabolism</keyword>
<keyword id="KW-0630">Potassium</keyword>
<keyword id="KW-1185">Reference proteome</keyword>
<keyword id="KW-0808">Transferase</keyword>
<evidence type="ECO:0000255" key="1">
    <source>
        <dbReference type="HAMAP-Rule" id="MF_00086"/>
    </source>
</evidence>
<comment type="function">
    <text evidence="1">Catalyzes the formation of S-adenosylmethionine (AdoMet) from methionine and ATP. The overall synthetic reaction is composed of two sequential steps, AdoMet formation and the subsequent tripolyphosphate hydrolysis which occurs prior to release of AdoMet from the enzyme.</text>
</comment>
<comment type="catalytic activity">
    <reaction evidence="1">
        <text>L-methionine + ATP + H2O = S-adenosyl-L-methionine + phosphate + diphosphate</text>
        <dbReference type="Rhea" id="RHEA:21080"/>
        <dbReference type="ChEBI" id="CHEBI:15377"/>
        <dbReference type="ChEBI" id="CHEBI:30616"/>
        <dbReference type="ChEBI" id="CHEBI:33019"/>
        <dbReference type="ChEBI" id="CHEBI:43474"/>
        <dbReference type="ChEBI" id="CHEBI:57844"/>
        <dbReference type="ChEBI" id="CHEBI:59789"/>
        <dbReference type="EC" id="2.5.1.6"/>
    </reaction>
</comment>
<comment type="cofactor">
    <cofactor evidence="1">
        <name>Mg(2+)</name>
        <dbReference type="ChEBI" id="CHEBI:18420"/>
    </cofactor>
    <text evidence="1">Binds 2 divalent ions per subunit.</text>
</comment>
<comment type="cofactor">
    <cofactor evidence="1">
        <name>K(+)</name>
        <dbReference type="ChEBI" id="CHEBI:29103"/>
    </cofactor>
    <text evidence="1">Binds 1 potassium ion per subunit.</text>
</comment>
<comment type="pathway">
    <text evidence="1">Amino-acid biosynthesis; S-adenosyl-L-methionine biosynthesis; S-adenosyl-L-methionine from L-methionine: step 1/1.</text>
</comment>
<comment type="subunit">
    <text evidence="1">Homotetramer; dimer of dimers.</text>
</comment>
<comment type="subcellular location">
    <subcellularLocation>
        <location evidence="1">Cytoplasm</location>
    </subcellularLocation>
</comment>
<comment type="similarity">
    <text evidence="1">Belongs to the AdoMet synthase family.</text>
</comment>
<reference key="1">
    <citation type="journal article" date="2005" name="Genome Res.">
        <title>Genome sequence of Blochmannia pennsylvanicus indicates parallel evolutionary trends among bacterial mutualists of insects.</title>
        <authorList>
            <person name="Degnan P.H."/>
            <person name="Lazarus A.B."/>
            <person name="Wernegreen J.J."/>
        </authorList>
    </citation>
    <scope>NUCLEOTIDE SEQUENCE [LARGE SCALE GENOMIC DNA]</scope>
    <source>
        <strain>BPEN</strain>
    </source>
</reference>
<sequence length="389" mass="42512">MSQYSFTSESVSEGHPDKIADQISDAILDSILAQDPRARVACETYVKTGIVIMGGEITTTAWVNMEEIARNTIRDIGYVHSDMGFDANSCVILSVINKQSSDIQYSIDHGNTSTLQRGAGDQGLMFGYATNETSVFMPAPITYAHRLIKRKSQVRKSGVLPWLGLDAKSQVTVAYEHGKIIGITAVVLSIQHACDIKLTDLKEAAMEEIIKPVLPNKWLTNNTIFLINPGGRFVIGGPISDCGLTGRKIIVDTYGGIGRHGGGSFSGKDPSKVDRSAAYGARYVAKNIVAAGLADRCELQVSYAIGVPHPISMSIETFGTEKISHDILMQLIKNFFDFRPYGLIAMLDLLRPIYKETAVYGHFGRECFPWEKIDKADLLRDAAGLKCTP</sequence>
<dbReference type="EC" id="2.5.1.6" evidence="1"/>
<dbReference type="EMBL" id="CP000016">
    <property type="protein sequence ID" value="AAZ40890.1"/>
    <property type="molecule type" value="Genomic_DNA"/>
</dbReference>
<dbReference type="RefSeq" id="WP_011282797.1">
    <property type="nucleotide sequence ID" value="NC_007292.1"/>
</dbReference>
<dbReference type="SMR" id="Q493F2"/>
<dbReference type="STRING" id="291272.BPEN_259"/>
<dbReference type="KEGG" id="bpn:BPEN_259"/>
<dbReference type="eggNOG" id="COG0192">
    <property type="taxonomic scope" value="Bacteria"/>
</dbReference>
<dbReference type="HOGENOM" id="CLU_041802_1_1_6"/>
<dbReference type="OrthoDB" id="9801686at2"/>
<dbReference type="UniPathway" id="UPA00315">
    <property type="reaction ID" value="UER00080"/>
</dbReference>
<dbReference type="Proteomes" id="UP000007794">
    <property type="component" value="Chromosome"/>
</dbReference>
<dbReference type="GO" id="GO:0005737">
    <property type="term" value="C:cytoplasm"/>
    <property type="evidence" value="ECO:0007669"/>
    <property type="project" value="UniProtKB-SubCell"/>
</dbReference>
<dbReference type="GO" id="GO:0005524">
    <property type="term" value="F:ATP binding"/>
    <property type="evidence" value="ECO:0007669"/>
    <property type="project" value="UniProtKB-UniRule"/>
</dbReference>
<dbReference type="GO" id="GO:0000287">
    <property type="term" value="F:magnesium ion binding"/>
    <property type="evidence" value="ECO:0007669"/>
    <property type="project" value="UniProtKB-UniRule"/>
</dbReference>
<dbReference type="GO" id="GO:0004478">
    <property type="term" value="F:methionine adenosyltransferase activity"/>
    <property type="evidence" value="ECO:0007669"/>
    <property type="project" value="UniProtKB-UniRule"/>
</dbReference>
<dbReference type="GO" id="GO:0006730">
    <property type="term" value="P:one-carbon metabolic process"/>
    <property type="evidence" value="ECO:0007669"/>
    <property type="project" value="UniProtKB-KW"/>
</dbReference>
<dbReference type="GO" id="GO:0006556">
    <property type="term" value="P:S-adenosylmethionine biosynthetic process"/>
    <property type="evidence" value="ECO:0007669"/>
    <property type="project" value="UniProtKB-UniRule"/>
</dbReference>
<dbReference type="CDD" id="cd18079">
    <property type="entry name" value="S-AdoMet_synt"/>
    <property type="match status" value="1"/>
</dbReference>
<dbReference type="FunFam" id="3.30.300.10:FF:000003">
    <property type="entry name" value="S-adenosylmethionine synthase"/>
    <property type="match status" value="1"/>
</dbReference>
<dbReference type="Gene3D" id="3.30.300.10">
    <property type="match status" value="3"/>
</dbReference>
<dbReference type="HAMAP" id="MF_00086">
    <property type="entry name" value="S_AdoMet_synth1"/>
    <property type="match status" value="1"/>
</dbReference>
<dbReference type="InterPro" id="IPR022631">
    <property type="entry name" value="ADOMET_SYNTHASE_CS"/>
</dbReference>
<dbReference type="InterPro" id="IPR022630">
    <property type="entry name" value="S-AdoMet_synt_C"/>
</dbReference>
<dbReference type="InterPro" id="IPR022629">
    <property type="entry name" value="S-AdoMet_synt_central"/>
</dbReference>
<dbReference type="InterPro" id="IPR022628">
    <property type="entry name" value="S-AdoMet_synt_N"/>
</dbReference>
<dbReference type="InterPro" id="IPR002133">
    <property type="entry name" value="S-AdoMet_synthetase"/>
</dbReference>
<dbReference type="InterPro" id="IPR022636">
    <property type="entry name" value="S-AdoMet_synthetase_sfam"/>
</dbReference>
<dbReference type="NCBIfam" id="TIGR01034">
    <property type="entry name" value="metK"/>
    <property type="match status" value="1"/>
</dbReference>
<dbReference type="PANTHER" id="PTHR11964">
    <property type="entry name" value="S-ADENOSYLMETHIONINE SYNTHETASE"/>
    <property type="match status" value="1"/>
</dbReference>
<dbReference type="Pfam" id="PF02773">
    <property type="entry name" value="S-AdoMet_synt_C"/>
    <property type="match status" value="1"/>
</dbReference>
<dbReference type="Pfam" id="PF02772">
    <property type="entry name" value="S-AdoMet_synt_M"/>
    <property type="match status" value="1"/>
</dbReference>
<dbReference type="Pfam" id="PF00438">
    <property type="entry name" value="S-AdoMet_synt_N"/>
    <property type="match status" value="1"/>
</dbReference>
<dbReference type="PIRSF" id="PIRSF000497">
    <property type="entry name" value="MAT"/>
    <property type="match status" value="1"/>
</dbReference>
<dbReference type="SUPFAM" id="SSF55973">
    <property type="entry name" value="S-adenosylmethionine synthetase"/>
    <property type="match status" value="3"/>
</dbReference>
<dbReference type="PROSITE" id="PS00376">
    <property type="entry name" value="ADOMET_SYNTHASE_1"/>
    <property type="match status" value="1"/>
</dbReference>
<dbReference type="PROSITE" id="PS00377">
    <property type="entry name" value="ADOMET_SYNTHASE_2"/>
    <property type="match status" value="1"/>
</dbReference>
<proteinExistence type="inferred from homology"/>
<name>METK_BLOPB</name>
<feature type="chain" id="PRO_0000240982" description="S-adenosylmethionine synthase">
    <location>
        <begin position="1"/>
        <end position="389"/>
    </location>
</feature>
<feature type="region of interest" description="Flexible loop" evidence="1">
    <location>
        <begin position="99"/>
        <end position="109"/>
    </location>
</feature>
<feature type="binding site" description="in other chain" evidence="1">
    <location>
        <position position="15"/>
    </location>
    <ligand>
        <name>ATP</name>
        <dbReference type="ChEBI" id="CHEBI:30616"/>
        <note>ligand shared between two neighboring subunits</note>
    </ligand>
</feature>
<feature type="binding site" evidence="1">
    <location>
        <position position="17"/>
    </location>
    <ligand>
        <name>Mg(2+)</name>
        <dbReference type="ChEBI" id="CHEBI:18420"/>
    </ligand>
</feature>
<feature type="binding site" evidence="1">
    <location>
        <position position="43"/>
    </location>
    <ligand>
        <name>K(+)</name>
        <dbReference type="ChEBI" id="CHEBI:29103"/>
    </ligand>
</feature>
<feature type="binding site" description="in other chain" evidence="1">
    <location>
        <position position="56"/>
    </location>
    <ligand>
        <name>L-methionine</name>
        <dbReference type="ChEBI" id="CHEBI:57844"/>
        <note>ligand shared between two neighboring subunits</note>
    </ligand>
</feature>
<feature type="binding site" description="in other chain" evidence="1">
    <location>
        <position position="99"/>
    </location>
    <ligand>
        <name>L-methionine</name>
        <dbReference type="ChEBI" id="CHEBI:57844"/>
        <note>ligand shared between two neighboring subunits</note>
    </ligand>
</feature>
<feature type="binding site" description="in other chain" evidence="1">
    <location>
        <begin position="166"/>
        <end position="168"/>
    </location>
    <ligand>
        <name>ATP</name>
        <dbReference type="ChEBI" id="CHEBI:30616"/>
        <note>ligand shared between two neighboring subunits</note>
    </ligand>
</feature>
<feature type="binding site" description="in other chain" evidence="1">
    <location>
        <begin position="232"/>
        <end position="233"/>
    </location>
    <ligand>
        <name>ATP</name>
        <dbReference type="ChEBI" id="CHEBI:30616"/>
        <note>ligand shared between two neighboring subunits</note>
    </ligand>
</feature>
<feature type="binding site" evidence="1">
    <location>
        <position position="241"/>
    </location>
    <ligand>
        <name>ATP</name>
        <dbReference type="ChEBI" id="CHEBI:30616"/>
        <note>ligand shared between two neighboring subunits</note>
    </ligand>
</feature>
<feature type="binding site" evidence="1">
    <location>
        <position position="241"/>
    </location>
    <ligand>
        <name>L-methionine</name>
        <dbReference type="ChEBI" id="CHEBI:57844"/>
        <note>ligand shared between two neighboring subunits</note>
    </ligand>
</feature>
<feature type="binding site" description="in other chain" evidence="1">
    <location>
        <begin position="247"/>
        <end position="248"/>
    </location>
    <ligand>
        <name>ATP</name>
        <dbReference type="ChEBI" id="CHEBI:30616"/>
        <note>ligand shared between two neighboring subunits</note>
    </ligand>
</feature>
<feature type="binding site" evidence="1">
    <location>
        <position position="264"/>
    </location>
    <ligand>
        <name>ATP</name>
        <dbReference type="ChEBI" id="CHEBI:30616"/>
        <note>ligand shared between two neighboring subunits</note>
    </ligand>
</feature>
<feature type="binding site" evidence="1">
    <location>
        <position position="268"/>
    </location>
    <ligand>
        <name>ATP</name>
        <dbReference type="ChEBI" id="CHEBI:30616"/>
        <note>ligand shared between two neighboring subunits</note>
    </ligand>
</feature>
<feature type="binding site" description="in other chain" evidence="1">
    <location>
        <position position="272"/>
    </location>
    <ligand>
        <name>L-methionine</name>
        <dbReference type="ChEBI" id="CHEBI:57844"/>
        <note>ligand shared between two neighboring subunits</note>
    </ligand>
</feature>
<accession>Q493F2</accession>
<organism>
    <name type="scientific">Blochmanniella pennsylvanica (strain BPEN)</name>
    <dbReference type="NCBI Taxonomy" id="291272"/>
    <lineage>
        <taxon>Bacteria</taxon>
        <taxon>Pseudomonadati</taxon>
        <taxon>Pseudomonadota</taxon>
        <taxon>Gammaproteobacteria</taxon>
        <taxon>Enterobacterales</taxon>
        <taxon>Enterobacteriaceae</taxon>
        <taxon>ant endosymbionts</taxon>
        <taxon>Candidatus Blochmanniella</taxon>
    </lineage>
</organism>